<dbReference type="EMBL" id="AY243312">
    <property type="protein sequence ID" value="AAO89332.1"/>
    <property type="molecule type" value="Genomic_DNA"/>
</dbReference>
<dbReference type="RefSeq" id="YP_232935.1">
    <property type="nucleotide sequence ID" value="NC_006998.1"/>
</dbReference>
<dbReference type="SMR" id="P68707"/>
<dbReference type="DNASU" id="3707510"/>
<dbReference type="GeneID" id="3707510"/>
<dbReference type="KEGG" id="vg:3707510"/>
<dbReference type="Proteomes" id="UP000000344">
    <property type="component" value="Genome"/>
</dbReference>
<dbReference type="GO" id="GO:0042025">
    <property type="term" value="C:host cell nucleus"/>
    <property type="evidence" value="ECO:0000305"/>
    <property type="project" value="UniProt"/>
</dbReference>
<dbReference type="GO" id="GO:0140311">
    <property type="term" value="F:protein sequestering activity"/>
    <property type="evidence" value="ECO:0000314"/>
    <property type="project" value="UniProt"/>
</dbReference>
<dbReference type="GO" id="GO:0085034">
    <property type="term" value="P:symbiont-mediated suppression of host NF-kappaB cascade"/>
    <property type="evidence" value="ECO:0000314"/>
    <property type="project" value="UniProt"/>
</dbReference>
<dbReference type="InterPro" id="IPR009280">
    <property type="entry name" value="Orthopox_F14"/>
</dbReference>
<dbReference type="Pfam" id="PF06076">
    <property type="entry name" value="Orthopox_F14"/>
    <property type="match status" value="1"/>
</dbReference>
<name>PG058_VACCW</name>
<keyword id="KW-0244">Early protein</keyword>
<keyword id="KW-1185">Reference proteome</keyword>
<reference key="1">
    <citation type="submission" date="2003-02" db="EMBL/GenBank/DDBJ databases">
        <title>Sequencing of the coding region of Vaccinia-WR to an average 9-fold redundancy and an error rate of 0.16/10kb.</title>
        <authorList>
            <person name="Esposito J.J."/>
            <person name="Frace A.M."/>
            <person name="Sammons S.A."/>
            <person name="Olsen-Rasmussen M."/>
            <person name="Osborne J."/>
            <person name="Wohlhueter R."/>
        </authorList>
    </citation>
    <scope>NUCLEOTIDE SEQUENCE [LARGE SCALE GENOMIC DNA]</scope>
</reference>
<reference key="2">
    <citation type="journal article" date="2015" name="J. Virol.">
        <title>Deciphering poxvirus gene expression by RNA sequencing and ribosome profiling.</title>
        <authorList>
            <person name="Yang Z."/>
            <person name="Cao S."/>
            <person name="Martens C.A."/>
            <person name="Porcella S.F."/>
            <person name="Xie Z."/>
            <person name="Ma M."/>
            <person name="Shen B."/>
            <person name="Moss B."/>
        </authorList>
    </citation>
    <scope>INDUCTION</scope>
</reference>
<gene>
    <name type="primary">OPG058</name>
    <name type="ordered locus">VACWR053</name>
    <name type="ORF">F14L</name>
</gene>
<sequence>MKHRLYSEGLSISNDLNSIIGQQSTMDTDIEIDEDDIMELLNILTELGCDVDFDENFSDIADDILESLIEQDV</sequence>
<accession>P68707</accession>
<accession>O57180</accession>
<accession>Q80HX5</accession>
<organism>
    <name type="scientific">Vaccinia virus (strain Western Reserve)</name>
    <name type="common">VACV</name>
    <name type="synonym">Vaccinia virus (strain WR)</name>
    <dbReference type="NCBI Taxonomy" id="10254"/>
    <lineage>
        <taxon>Viruses</taxon>
        <taxon>Varidnaviria</taxon>
        <taxon>Bamfordvirae</taxon>
        <taxon>Nucleocytoviricota</taxon>
        <taxon>Pokkesviricetes</taxon>
        <taxon>Chitovirales</taxon>
        <taxon>Poxviridae</taxon>
        <taxon>Chordopoxvirinae</taxon>
        <taxon>Orthopoxvirus</taxon>
        <taxon>Vaccinia virus</taxon>
    </lineage>
</organism>
<feature type="chain" id="PRO_0000099509" description="Protein OPG058">
    <location>
        <begin position="1"/>
        <end position="73"/>
    </location>
</feature>
<proteinExistence type="evidence at transcript level"/>
<organismHost>
    <name type="scientific">Bos taurus</name>
    <name type="common">Bovine</name>
    <dbReference type="NCBI Taxonomy" id="9913"/>
</organismHost>
<evidence type="ECO:0000269" key="1">
    <source>
    </source>
</evidence>
<evidence type="ECO:0000305" key="2"/>
<comment type="induction">
    <text evidence="1">Expressed in the early phase of the viral replicative cycle.</text>
</comment>
<comment type="similarity">
    <text evidence="2">Belongs to the orthopoxvirus OPG058 family.</text>
</comment>
<protein>
    <recommendedName>
        <fullName>Protein OPG058</fullName>
    </recommendedName>
    <alternativeName>
        <fullName>Protein F14</fullName>
    </alternativeName>
</protein>